<accession>A7MWW3</accession>
<proteinExistence type="inferred from homology"/>
<sequence>MKNPCNVIAIIGKPRDQQAIQTHRELYEWLTSEGYQVFIDDRLAAILDEIPQSQFASLVELGKNADLAIVVGGDGNMLGAARILSRFDVAVIGVNRGNLGFLTDLNPDDFKEALKAVLKGKYIEEERFLLEAEIHRHGQIKSHNAALNEAVLHPGQVAHMIEFEVYIDDSFAFSLRADGLIVSTPTGSTAYSLSGGGPILSPSLNAISLVPMFPHTLSSRPLVVDGKRRIKLIVSPENRGTQEVSCDGQVSLPVSPGDEIHIYQSPNVLKLIHPKDYSYYHVLRNKLGWSSKLF</sequence>
<dbReference type="EC" id="2.7.1.23" evidence="1"/>
<dbReference type="EMBL" id="CP000789">
    <property type="protein sequence ID" value="ABU70121.1"/>
    <property type="molecule type" value="Genomic_DNA"/>
</dbReference>
<dbReference type="RefSeq" id="WP_012127134.1">
    <property type="nucleotide sequence ID" value="NC_022269.1"/>
</dbReference>
<dbReference type="SMR" id="A7MWW3"/>
<dbReference type="KEGG" id="vha:VIBHAR_01131"/>
<dbReference type="PATRIC" id="fig|338187.25.peg.1497"/>
<dbReference type="Proteomes" id="UP000008152">
    <property type="component" value="Chromosome I"/>
</dbReference>
<dbReference type="GO" id="GO:0005737">
    <property type="term" value="C:cytoplasm"/>
    <property type="evidence" value="ECO:0007669"/>
    <property type="project" value="UniProtKB-SubCell"/>
</dbReference>
<dbReference type="GO" id="GO:0005524">
    <property type="term" value="F:ATP binding"/>
    <property type="evidence" value="ECO:0007669"/>
    <property type="project" value="UniProtKB-KW"/>
</dbReference>
<dbReference type="GO" id="GO:0046872">
    <property type="term" value="F:metal ion binding"/>
    <property type="evidence" value="ECO:0007669"/>
    <property type="project" value="UniProtKB-UniRule"/>
</dbReference>
<dbReference type="GO" id="GO:0051287">
    <property type="term" value="F:NAD binding"/>
    <property type="evidence" value="ECO:0007669"/>
    <property type="project" value="UniProtKB-ARBA"/>
</dbReference>
<dbReference type="GO" id="GO:0003951">
    <property type="term" value="F:NAD+ kinase activity"/>
    <property type="evidence" value="ECO:0007669"/>
    <property type="project" value="UniProtKB-UniRule"/>
</dbReference>
<dbReference type="GO" id="GO:0019674">
    <property type="term" value="P:NAD metabolic process"/>
    <property type="evidence" value="ECO:0007669"/>
    <property type="project" value="InterPro"/>
</dbReference>
<dbReference type="GO" id="GO:0006741">
    <property type="term" value="P:NADP biosynthetic process"/>
    <property type="evidence" value="ECO:0007669"/>
    <property type="project" value="UniProtKB-UniRule"/>
</dbReference>
<dbReference type="FunFam" id="2.60.200.30:FF:000001">
    <property type="entry name" value="NAD kinase"/>
    <property type="match status" value="1"/>
</dbReference>
<dbReference type="Gene3D" id="3.40.50.10330">
    <property type="entry name" value="Probable inorganic polyphosphate/atp-NAD kinase, domain 1"/>
    <property type="match status" value="1"/>
</dbReference>
<dbReference type="Gene3D" id="2.60.200.30">
    <property type="entry name" value="Probable inorganic polyphosphate/atp-NAD kinase, domain 2"/>
    <property type="match status" value="1"/>
</dbReference>
<dbReference type="HAMAP" id="MF_00361">
    <property type="entry name" value="NAD_kinase"/>
    <property type="match status" value="1"/>
</dbReference>
<dbReference type="InterPro" id="IPR017438">
    <property type="entry name" value="ATP-NAD_kinase_N"/>
</dbReference>
<dbReference type="InterPro" id="IPR017437">
    <property type="entry name" value="ATP-NAD_kinase_PpnK-typ_C"/>
</dbReference>
<dbReference type="InterPro" id="IPR016064">
    <property type="entry name" value="NAD/diacylglycerol_kinase_sf"/>
</dbReference>
<dbReference type="InterPro" id="IPR002504">
    <property type="entry name" value="NADK"/>
</dbReference>
<dbReference type="NCBIfam" id="NF002306">
    <property type="entry name" value="PRK01231.1"/>
    <property type="match status" value="1"/>
</dbReference>
<dbReference type="NCBIfam" id="NF002893">
    <property type="entry name" value="PRK03378.1"/>
    <property type="match status" value="1"/>
</dbReference>
<dbReference type="PANTHER" id="PTHR20275">
    <property type="entry name" value="NAD KINASE"/>
    <property type="match status" value="1"/>
</dbReference>
<dbReference type="PANTHER" id="PTHR20275:SF0">
    <property type="entry name" value="NAD KINASE"/>
    <property type="match status" value="1"/>
</dbReference>
<dbReference type="Pfam" id="PF01513">
    <property type="entry name" value="NAD_kinase"/>
    <property type="match status" value="1"/>
</dbReference>
<dbReference type="Pfam" id="PF20143">
    <property type="entry name" value="NAD_kinase_C"/>
    <property type="match status" value="1"/>
</dbReference>
<dbReference type="SUPFAM" id="SSF111331">
    <property type="entry name" value="NAD kinase/diacylglycerol kinase-like"/>
    <property type="match status" value="1"/>
</dbReference>
<comment type="function">
    <text evidence="1">Involved in the regulation of the intracellular balance of NAD and NADP, and is a key enzyme in the biosynthesis of NADP. Catalyzes specifically the phosphorylation on 2'-hydroxyl of the adenosine moiety of NAD to yield NADP.</text>
</comment>
<comment type="catalytic activity">
    <reaction evidence="1">
        <text>NAD(+) + ATP = ADP + NADP(+) + H(+)</text>
        <dbReference type="Rhea" id="RHEA:18629"/>
        <dbReference type="ChEBI" id="CHEBI:15378"/>
        <dbReference type="ChEBI" id="CHEBI:30616"/>
        <dbReference type="ChEBI" id="CHEBI:57540"/>
        <dbReference type="ChEBI" id="CHEBI:58349"/>
        <dbReference type="ChEBI" id="CHEBI:456216"/>
        <dbReference type="EC" id="2.7.1.23"/>
    </reaction>
</comment>
<comment type="cofactor">
    <cofactor evidence="1">
        <name>a divalent metal cation</name>
        <dbReference type="ChEBI" id="CHEBI:60240"/>
    </cofactor>
</comment>
<comment type="subcellular location">
    <subcellularLocation>
        <location evidence="1">Cytoplasm</location>
    </subcellularLocation>
</comment>
<comment type="similarity">
    <text evidence="1">Belongs to the NAD kinase family.</text>
</comment>
<gene>
    <name evidence="1" type="primary">nadK</name>
    <name type="ordered locus">VIBHAR_01131</name>
</gene>
<name>NADK_VIBC1</name>
<evidence type="ECO:0000255" key="1">
    <source>
        <dbReference type="HAMAP-Rule" id="MF_00361"/>
    </source>
</evidence>
<organism>
    <name type="scientific">Vibrio campbellii (strain ATCC BAA-1116)</name>
    <dbReference type="NCBI Taxonomy" id="2902295"/>
    <lineage>
        <taxon>Bacteria</taxon>
        <taxon>Pseudomonadati</taxon>
        <taxon>Pseudomonadota</taxon>
        <taxon>Gammaproteobacteria</taxon>
        <taxon>Vibrionales</taxon>
        <taxon>Vibrionaceae</taxon>
        <taxon>Vibrio</taxon>
    </lineage>
</organism>
<keyword id="KW-0067">ATP-binding</keyword>
<keyword id="KW-0963">Cytoplasm</keyword>
<keyword id="KW-0418">Kinase</keyword>
<keyword id="KW-0520">NAD</keyword>
<keyword id="KW-0521">NADP</keyword>
<keyword id="KW-0547">Nucleotide-binding</keyword>
<keyword id="KW-0808">Transferase</keyword>
<feature type="chain" id="PRO_1000079528" description="NAD kinase">
    <location>
        <begin position="1"/>
        <end position="294"/>
    </location>
</feature>
<feature type="active site" description="Proton acceptor" evidence="1">
    <location>
        <position position="74"/>
    </location>
</feature>
<feature type="binding site" evidence="1">
    <location>
        <begin position="74"/>
        <end position="75"/>
    </location>
    <ligand>
        <name>NAD(+)</name>
        <dbReference type="ChEBI" id="CHEBI:57540"/>
    </ligand>
</feature>
<feature type="binding site" evidence="1">
    <location>
        <begin position="148"/>
        <end position="149"/>
    </location>
    <ligand>
        <name>NAD(+)</name>
        <dbReference type="ChEBI" id="CHEBI:57540"/>
    </ligand>
</feature>
<feature type="binding site" evidence="1">
    <location>
        <position position="159"/>
    </location>
    <ligand>
        <name>NAD(+)</name>
        <dbReference type="ChEBI" id="CHEBI:57540"/>
    </ligand>
</feature>
<feature type="binding site" evidence="1">
    <location>
        <position position="176"/>
    </location>
    <ligand>
        <name>NAD(+)</name>
        <dbReference type="ChEBI" id="CHEBI:57540"/>
    </ligand>
</feature>
<feature type="binding site" evidence="1">
    <location>
        <position position="178"/>
    </location>
    <ligand>
        <name>NAD(+)</name>
        <dbReference type="ChEBI" id="CHEBI:57540"/>
    </ligand>
</feature>
<feature type="binding site" evidence="1">
    <location>
        <begin position="189"/>
        <end position="194"/>
    </location>
    <ligand>
        <name>NAD(+)</name>
        <dbReference type="ChEBI" id="CHEBI:57540"/>
    </ligand>
</feature>
<feature type="binding site" evidence="1">
    <location>
        <position position="249"/>
    </location>
    <ligand>
        <name>NAD(+)</name>
        <dbReference type="ChEBI" id="CHEBI:57540"/>
    </ligand>
</feature>
<reference key="1">
    <citation type="submission" date="2007-08" db="EMBL/GenBank/DDBJ databases">
        <authorList>
            <consortium name="The Vibrio harveyi Genome Sequencing Project"/>
            <person name="Bassler B."/>
            <person name="Clifton S.W."/>
            <person name="Fulton L."/>
            <person name="Delehaunty K."/>
            <person name="Fronick C."/>
            <person name="Harrison M."/>
            <person name="Markivic C."/>
            <person name="Fulton R."/>
            <person name="Tin-Wollam A.-M."/>
            <person name="Shah N."/>
            <person name="Pepin K."/>
            <person name="Nash W."/>
            <person name="Thiruvilangam P."/>
            <person name="Bhonagiri V."/>
            <person name="Waters C."/>
            <person name="Tu K.C."/>
            <person name="Irgon J."/>
            <person name="Wilson R.K."/>
        </authorList>
    </citation>
    <scope>NUCLEOTIDE SEQUENCE [LARGE SCALE GENOMIC DNA]</scope>
    <source>
        <strain>ATCC BAA-1116 / BB120</strain>
    </source>
</reference>
<protein>
    <recommendedName>
        <fullName evidence="1">NAD kinase</fullName>
        <ecNumber evidence="1">2.7.1.23</ecNumber>
    </recommendedName>
    <alternativeName>
        <fullName evidence="1">ATP-dependent NAD kinase</fullName>
    </alternativeName>
</protein>